<evidence type="ECO:0000255" key="1">
    <source>
        <dbReference type="HAMAP-Rule" id="MF_01864"/>
    </source>
</evidence>
<evidence type="ECO:0000255" key="2">
    <source>
        <dbReference type="PROSITE-ProRule" id="PRU01266"/>
    </source>
</evidence>
<evidence type="ECO:0000305" key="3"/>
<name>MIAB_SALPB</name>
<sequence>MTKKLHIKTWGCQMNEYDSSKMADLLDATHGYQLTDVAEEADVLLLNTCSIREKAQEKVFHQLGRWRLLKEKNPDLIIGVGGCVASQEGEHIRQRAHYVDIIFGPQTLHRLPEMINSVRGDRSPVVDISFPEIEKFDRLPEPRAEGPTAFVSIMEGCNKYCTYCVVPYTRGEEVSRPSDDILFEIAQLAAQGVREVNLLGQNVNAWRGENYDGTTGTFADLLRLVAAIDGIDRIRFTTSHPIEFTDDIIEVYRDTPELVSFLHLPVQSGSDRVLNLMGRTHTALEYKAIIRKLRAARPDIQISSDFIVGFPGETTDDFEKTMKLIADVNFDMSYSFIFSARPGTPAADMVDDVPEEEKKQRLYILQERINQQAMAWSRRMLGTTQRILVEGTSRKNIMELSGRTENNRVVNFEGTPEMIGKFVDVEITDVYPNSLRGKVVRTEDEMGLRVAETPESVIARTRKENELGVGFYQP</sequence>
<accession>A9MUH8</accession>
<proteinExistence type="inferred from homology"/>
<feature type="chain" id="PRO_0000374529" description="tRNA-2-methylthio-N(6)-dimethylallyladenosine synthase">
    <location>
        <begin position="1"/>
        <end position="474"/>
    </location>
</feature>
<feature type="domain" description="MTTase N-terminal" evidence="1">
    <location>
        <begin position="3"/>
        <end position="120"/>
    </location>
</feature>
<feature type="domain" description="Radical SAM core" evidence="2">
    <location>
        <begin position="143"/>
        <end position="375"/>
    </location>
</feature>
<feature type="domain" description="TRAM" evidence="1">
    <location>
        <begin position="378"/>
        <end position="441"/>
    </location>
</feature>
<feature type="binding site" evidence="1">
    <location>
        <position position="12"/>
    </location>
    <ligand>
        <name>[4Fe-4S] cluster</name>
        <dbReference type="ChEBI" id="CHEBI:49883"/>
        <label>1</label>
    </ligand>
</feature>
<feature type="binding site" evidence="1">
    <location>
        <position position="49"/>
    </location>
    <ligand>
        <name>[4Fe-4S] cluster</name>
        <dbReference type="ChEBI" id="CHEBI:49883"/>
        <label>1</label>
    </ligand>
</feature>
<feature type="binding site" evidence="1">
    <location>
        <position position="83"/>
    </location>
    <ligand>
        <name>[4Fe-4S] cluster</name>
        <dbReference type="ChEBI" id="CHEBI:49883"/>
        <label>1</label>
    </ligand>
</feature>
<feature type="binding site" evidence="1">
    <location>
        <position position="157"/>
    </location>
    <ligand>
        <name>[4Fe-4S] cluster</name>
        <dbReference type="ChEBI" id="CHEBI:49883"/>
        <label>2</label>
        <note>4Fe-4S-S-AdoMet</note>
    </ligand>
</feature>
<feature type="binding site" evidence="1">
    <location>
        <position position="161"/>
    </location>
    <ligand>
        <name>[4Fe-4S] cluster</name>
        <dbReference type="ChEBI" id="CHEBI:49883"/>
        <label>2</label>
        <note>4Fe-4S-S-AdoMet</note>
    </ligand>
</feature>
<feature type="binding site" evidence="1">
    <location>
        <position position="164"/>
    </location>
    <ligand>
        <name>[4Fe-4S] cluster</name>
        <dbReference type="ChEBI" id="CHEBI:49883"/>
        <label>2</label>
        <note>4Fe-4S-S-AdoMet</note>
    </ligand>
</feature>
<gene>
    <name evidence="1" type="primary">miaB</name>
    <name type="ordered locus">SPAB_02876</name>
</gene>
<keyword id="KW-0004">4Fe-4S</keyword>
<keyword id="KW-0963">Cytoplasm</keyword>
<keyword id="KW-0408">Iron</keyword>
<keyword id="KW-0411">Iron-sulfur</keyword>
<keyword id="KW-0479">Metal-binding</keyword>
<keyword id="KW-0949">S-adenosyl-L-methionine</keyword>
<keyword id="KW-0808">Transferase</keyword>
<keyword id="KW-0819">tRNA processing</keyword>
<reference key="1">
    <citation type="submission" date="2007-11" db="EMBL/GenBank/DDBJ databases">
        <authorList>
            <consortium name="The Salmonella enterica serovar Paratyphi B Genome Sequencing Project"/>
            <person name="McClelland M."/>
            <person name="Sanderson E.K."/>
            <person name="Porwollik S."/>
            <person name="Spieth J."/>
            <person name="Clifton W.S."/>
            <person name="Fulton R."/>
            <person name="Cordes M."/>
            <person name="Wollam A."/>
            <person name="Shah N."/>
            <person name="Pepin K."/>
            <person name="Bhonagiri V."/>
            <person name="Nash W."/>
            <person name="Johnson M."/>
            <person name="Thiruvilangam P."/>
            <person name="Wilson R."/>
        </authorList>
    </citation>
    <scope>NUCLEOTIDE SEQUENCE [LARGE SCALE GENOMIC DNA]</scope>
    <source>
        <strain>ATCC BAA-1250 / SPB7</strain>
    </source>
</reference>
<organism>
    <name type="scientific">Salmonella paratyphi B (strain ATCC BAA-1250 / SPB7)</name>
    <dbReference type="NCBI Taxonomy" id="1016998"/>
    <lineage>
        <taxon>Bacteria</taxon>
        <taxon>Pseudomonadati</taxon>
        <taxon>Pseudomonadota</taxon>
        <taxon>Gammaproteobacteria</taxon>
        <taxon>Enterobacterales</taxon>
        <taxon>Enterobacteriaceae</taxon>
        <taxon>Salmonella</taxon>
    </lineage>
</organism>
<dbReference type="EC" id="2.8.4.3" evidence="1"/>
<dbReference type="EMBL" id="CP000886">
    <property type="protein sequence ID" value="ABX68241.1"/>
    <property type="status" value="ALT_INIT"/>
    <property type="molecule type" value="Genomic_DNA"/>
</dbReference>
<dbReference type="RefSeq" id="WP_001519200.1">
    <property type="nucleotide sequence ID" value="NC_010102.1"/>
</dbReference>
<dbReference type="SMR" id="A9MUH8"/>
<dbReference type="KEGG" id="spq:SPAB_02876"/>
<dbReference type="PATRIC" id="fig|1016998.12.peg.2711"/>
<dbReference type="HOGENOM" id="CLU_018697_2_0_6"/>
<dbReference type="BioCyc" id="SENT1016998:SPAB_RS11710-MONOMER"/>
<dbReference type="Proteomes" id="UP000008556">
    <property type="component" value="Chromosome"/>
</dbReference>
<dbReference type="GO" id="GO:0005829">
    <property type="term" value="C:cytosol"/>
    <property type="evidence" value="ECO:0007669"/>
    <property type="project" value="TreeGrafter"/>
</dbReference>
<dbReference type="GO" id="GO:0051539">
    <property type="term" value="F:4 iron, 4 sulfur cluster binding"/>
    <property type="evidence" value="ECO:0007669"/>
    <property type="project" value="UniProtKB-UniRule"/>
</dbReference>
<dbReference type="GO" id="GO:0046872">
    <property type="term" value="F:metal ion binding"/>
    <property type="evidence" value="ECO:0007669"/>
    <property type="project" value="UniProtKB-KW"/>
</dbReference>
<dbReference type="GO" id="GO:0035597">
    <property type="term" value="F:N6-isopentenyladenosine methylthiotransferase activity"/>
    <property type="evidence" value="ECO:0007669"/>
    <property type="project" value="TreeGrafter"/>
</dbReference>
<dbReference type="CDD" id="cd01335">
    <property type="entry name" value="Radical_SAM"/>
    <property type="match status" value="1"/>
</dbReference>
<dbReference type="FunFam" id="3.40.50.12160:FF:000001">
    <property type="entry name" value="tRNA-2-methylthio-N(6)-dimethylallyladenosine synthase"/>
    <property type="match status" value="1"/>
</dbReference>
<dbReference type="FunFam" id="3.80.30.20:FF:000001">
    <property type="entry name" value="tRNA-2-methylthio-N(6)-dimethylallyladenosine synthase 2"/>
    <property type="match status" value="1"/>
</dbReference>
<dbReference type="Gene3D" id="3.40.50.12160">
    <property type="entry name" value="Methylthiotransferase, N-terminal domain"/>
    <property type="match status" value="1"/>
</dbReference>
<dbReference type="Gene3D" id="3.80.30.20">
    <property type="entry name" value="tm_1862 like domain"/>
    <property type="match status" value="1"/>
</dbReference>
<dbReference type="HAMAP" id="MF_01864">
    <property type="entry name" value="tRNA_metthiotr_MiaB"/>
    <property type="match status" value="1"/>
</dbReference>
<dbReference type="InterPro" id="IPR006638">
    <property type="entry name" value="Elp3/MiaA/NifB-like_rSAM"/>
</dbReference>
<dbReference type="InterPro" id="IPR005839">
    <property type="entry name" value="Methylthiotransferase"/>
</dbReference>
<dbReference type="InterPro" id="IPR020612">
    <property type="entry name" value="Methylthiotransferase_CS"/>
</dbReference>
<dbReference type="InterPro" id="IPR013848">
    <property type="entry name" value="Methylthiotransferase_N"/>
</dbReference>
<dbReference type="InterPro" id="IPR038135">
    <property type="entry name" value="Methylthiotransferase_N_sf"/>
</dbReference>
<dbReference type="InterPro" id="IPR006463">
    <property type="entry name" value="MiaB_methiolase"/>
</dbReference>
<dbReference type="InterPro" id="IPR007197">
    <property type="entry name" value="rSAM"/>
</dbReference>
<dbReference type="InterPro" id="IPR023404">
    <property type="entry name" value="rSAM_horseshoe"/>
</dbReference>
<dbReference type="InterPro" id="IPR002792">
    <property type="entry name" value="TRAM_dom"/>
</dbReference>
<dbReference type="NCBIfam" id="TIGR01574">
    <property type="entry name" value="miaB-methiolase"/>
    <property type="match status" value="1"/>
</dbReference>
<dbReference type="NCBIfam" id="TIGR00089">
    <property type="entry name" value="MiaB/RimO family radical SAM methylthiotransferase"/>
    <property type="match status" value="1"/>
</dbReference>
<dbReference type="PANTHER" id="PTHR43020">
    <property type="entry name" value="CDK5 REGULATORY SUBUNIT-ASSOCIATED PROTEIN 1"/>
    <property type="match status" value="1"/>
</dbReference>
<dbReference type="PANTHER" id="PTHR43020:SF2">
    <property type="entry name" value="MITOCHONDRIAL TRNA METHYLTHIOTRANSFERASE CDK5RAP1"/>
    <property type="match status" value="1"/>
</dbReference>
<dbReference type="Pfam" id="PF04055">
    <property type="entry name" value="Radical_SAM"/>
    <property type="match status" value="1"/>
</dbReference>
<dbReference type="Pfam" id="PF01938">
    <property type="entry name" value="TRAM"/>
    <property type="match status" value="1"/>
</dbReference>
<dbReference type="Pfam" id="PF00919">
    <property type="entry name" value="UPF0004"/>
    <property type="match status" value="1"/>
</dbReference>
<dbReference type="SFLD" id="SFLDF00273">
    <property type="entry name" value="(dimethylallyl)adenosine_tRNA"/>
    <property type="match status" value="1"/>
</dbReference>
<dbReference type="SFLD" id="SFLDG01082">
    <property type="entry name" value="B12-binding_domain_containing"/>
    <property type="match status" value="1"/>
</dbReference>
<dbReference type="SFLD" id="SFLDS00029">
    <property type="entry name" value="Radical_SAM"/>
    <property type="match status" value="1"/>
</dbReference>
<dbReference type="SMART" id="SM00729">
    <property type="entry name" value="Elp3"/>
    <property type="match status" value="1"/>
</dbReference>
<dbReference type="SUPFAM" id="SSF102114">
    <property type="entry name" value="Radical SAM enzymes"/>
    <property type="match status" value="1"/>
</dbReference>
<dbReference type="PROSITE" id="PS51449">
    <property type="entry name" value="MTTASE_N"/>
    <property type="match status" value="1"/>
</dbReference>
<dbReference type="PROSITE" id="PS01278">
    <property type="entry name" value="MTTASE_RADICAL"/>
    <property type="match status" value="1"/>
</dbReference>
<dbReference type="PROSITE" id="PS51918">
    <property type="entry name" value="RADICAL_SAM"/>
    <property type="match status" value="1"/>
</dbReference>
<dbReference type="PROSITE" id="PS50926">
    <property type="entry name" value="TRAM"/>
    <property type="match status" value="1"/>
</dbReference>
<comment type="function">
    <text evidence="1">Catalyzes the methylthiolation of N6-(dimethylallyl)adenosine (i(6)A), leading to the formation of 2-methylthio-N6-(dimethylallyl)adenosine (ms(2)i(6)A) at position 37 in tRNAs that read codons beginning with uridine.</text>
</comment>
<comment type="catalytic activity">
    <reaction evidence="1">
        <text>N(6)-dimethylallyladenosine(37) in tRNA + (sulfur carrier)-SH + AH2 + 2 S-adenosyl-L-methionine = 2-methylsulfanyl-N(6)-dimethylallyladenosine(37) in tRNA + (sulfur carrier)-H + 5'-deoxyadenosine + L-methionine + A + S-adenosyl-L-homocysteine + 2 H(+)</text>
        <dbReference type="Rhea" id="RHEA:37067"/>
        <dbReference type="Rhea" id="RHEA-COMP:10375"/>
        <dbReference type="Rhea" id="RHEA-COMP:10376"/>
        <dbReference type="Rhea" id="RHEA-COMP:14737"/>
        <dbReference type="Rhea" id="RHEA-COMP:14739"/>
        <dbReference type="ChEBI" id="CHEBI:13193"/>
        <dbReference type="ChEBI" id="CHEBI:15378"/>
        <dbReference type="ChEBI" id="CHEBI:17319"/>
        <dbReference type="ChEBI" id="CHEBI:17499"/>
        <dbReference type="ChEBI" id="CHEBI:29917"/>
        <dbReference type="ChEBI" id="CHEBI:57844"/>
        <dbReference type="ChEBI" id="CHEBI:57856"/>
        <dbReference type="ChEBI" id="CHEBI:59789"/>
        <dbReference type="ChEBI" id="CHEBI:64428"/>
        <dbReference type="ChEBI" id="CHEBI:74415"/>
        <dbReference type="ChEBI" id="CHEBI:74417"/>
        <dbReference type="EC" id="2.8.4.3"/>
    </reaction>
</comment>
<comment type="cofactor">
    <cofactor evidence="1">
        <name>[4Fe-4S] cluster</name>
        <dbReference type="ChEBI" id="CHEBI:49883"/>
    </cofactor>
    <text evidence="1">Binds 2 [4Fe-4S] clusters. One cluster is coordinated with 3 cysteines and an exchangeable S-adenosyl-L-methionine.</text>
</comment>
<comment type="subunit">
    <text evidence="1">Monomer.</text>
</comment>
<comment type="subcellular location">
    <subcellularLocation>
        <location evidence="1">Cytoplasm</location>
    </subcellularLocation>
</comment>
<comment type="similarity">
    <text evidence="1">Belongs to the methylthiotransferase family. MiaB subfamily.</text>
</comment>
<comment type="sequence caution" evidence="3">
    <conflict type="erroneous initiation">
        <sequence resource="EMBL-CDS" id="ABX68241"/>
    </conflict>
</comment>
<protein>
    <recommendedName>
        <fullName evidence="1">tRNA-2-methylthio-N(6)-dimethylallyladenosine synthase</fullName>
        <ecNumber evidence="1">2.8.4.3</ecNumber>
    </recommendedName>
    <alternativeName>
        <fullName evidence="1">(Dimethylallyl)adenosine tRNA methylthiotransferase MiaB</fullName>
    </alternativeName>
    <alternativeName>
        <fullName evidence="1">tRNA-i(6)A37 methylthiotransferase</fullName>
    </alternativeName>
</protein>